<keyword id="KW-0963">Cytoplasm</keyword>
<keyword id="KW-0350">Heme biosynthesis</keyword>
<keyword id="KW-0479">Metal-binding</keyword>
<keyword id="KW-0560">Oxidoreductase</keyword>
<keyword id="KW-0627">Porphyrin biosynthesis</keyword>
<proteinExistence type="inferred from homology"/>
<comment type="function">
    <text evidence="1">Involved in the heme biosynthesis. Catalyzes the aerobic oxidative decarboxylation of propionate groups of rings A and B of coproporphyrinogen-III to yield the vinyl groups in protoporphyrinogen-IX.</text>
</comment>
<comment type="catalytic activity">
    <reaction evidence="1">
        <text>coproporphyrinogen III + O2 + 2 H(+) = protoporphyrinogen IX + 2 CO2 + 2 H2O</text>
        <dbReference type="Rhea" id="RHEA:18257"/>
        <dbReference type="ChEBI" id="CHEBI:15377"/>
        <dbReference type="ChEBI" id="CHEBI:15378"/>
        <dbReference type="ChEBI" id="CHEBI:15379"/>
        <dbReference type="ChEBI" id="CHEBI:16526"/>
        <dbReference type="ChEBI" id="CHEBI:57307"/>
        <dbReference type="ChEBI" id="CHEBI:57309"/>
        <dbReference type="EC" id="1.3.3.3"/>
    </reaction>
</comment>
<comment type="cofactor">
    <cofactor evidence="1">
        <name>a divalent metal cation</name>
        <dbReference type="ChEBI" id="CHEBI:60240"/>
    </cofactor>
</comment>
<comment type="pathway">
    <text evidence="1">Porphyrin-containing compound metabolism; protoporphyrin-IX biosynthesis; protoporphyrinogen-IX from coproporphyrinogen-III (O2 route): step 1/1.</text>
</comment>
<comment type="subunit">
    <text evidence="1">Homodimer.</text>
</comment>
<comment type="subcellular location">
    <subcellularLocation>
        <location evidence="1">Cytoplasm</location>
    </subcellularLocation>
</comment>
<comment type="similarity">
    <text evidence="1">Belongs to the aerobic coproporphyrinogen-III oxidase family.</text>
</comment>
<reference key="1">
    <citation type="submission" date="2007-11" db="EMBL/GenBank/DDBJ databases">
        <title>Genome sequencing of phylogenetically and phenotypically diverse Coxiella burnetii isolates.</title>
        <authorList>
            <person name="Seshadri R."/>
            <person name="Samuel J.E."/>
        </authorList>
    </citation>
    <scope>NUCLEOTIDE SEQUENCE [LARGE SCALE GENOMIC DNA]</scope>
    <source>
        <strain>RSA 331 / Henzerling II</strain>
    </source>
</reference>
<gene>
    <name evidence="1" type="primary">hemF</name>
    <name type="ordered locus">COXBURSA331_A1921</name>
</gene>
<protein>
    <recommendedName>
        <fullName evidence="1">Oxygen-dependent coproporphyrinogen-III oxidase</fullName>
        <shortName evidence="1">CPO</shortName>
        <shortName evidence="1">Coprogen oxidase</shortName>
        <shortName evidence="1">Coproporphyrinogenase</shortName>
        <ecNumber evidence="1">1.3.3.3</ecNumber>
    </recommendedName>
</protein>
<dbReference type="EC" id="1.3.3.3" evidence="1"/>
<dbReference type="EMBL" id="CP000890">
    <property type="protein sequence ID" value="ABX77533.1"/>
    <property type="molecule type" value="Genomic_DNA"/>
</dbReference>
<dbReference type="SMR" id="A9NA93"/>
<dbReference type="KEGG" id="cbs:COXBURSA331_A1921"/>
<dbReference type="HOGENOM" id="CLU_026169_0_1_6"/>
<dbReference type="UniPathway" id="UPA00251">
    <property type="reaction ID" value="UER00322"/>
</dbReference>
<dbReference type="GO" id="GO:0005737">
    <property type="term" value="C:cytoplasm"/>
    <property type="evidence" value="ECO:0007669"/>
    <property type="project" value="UniProtKB-SubCell"/>
</dbReference>
<dbReference type="GO" id="GO:0004109">
    <property type="term" value="F:coproporphyrinogen oxidase activity"/>
    <property type="evidence" value="ECO:0007669"/>
    <property type="project" value="UniProtKB-UniRule"/>
</dbReference>
<dbReference type="GO" id="GO:0046872">
    <property type="term" value="F:metal ion binding"/>
    <property type="evidence" value="ECO:0007669"/>
    <property type="project" value="UniProtKB-KW"/>
</dbReference>
<dbReference type="GO" id="GO:0042803">
    <property type="term" value="F:protein homodimerization activity"/>
    <property type="evidence" value="ECO:0000250"/>
    <property type="project" value="UniProtKB"/>
</dbReference>
<dbReference type="GO" id="GO:0006782">
    <property type="term" value="P:protoporphyrinogen IX biosynthetic process"/>
    <property type="evidence" value="ECO:0007669"/>
    <property type="project" value="UniProtKB-UniRule"/>
</dbReference>
<dbReference type="Gene3D" id="3.40.1500.10">
    <property type="entry name" value="Coproporphyrinogen III oxidase, aerobic"/>
    <property type="match status" value="1"/>
</dbReference>
<dbReference type="HAMAP" id="MF_00333">
    <property type="entry name" value="Coprogen_oxidas"/>
    <property type="match status" value="1"/>
</dbReference>
<dbReference type="InterPro" id="IPR001260">
    <property type="entry name" value="Coprogen_oxidase_aer"/>
</dbReference>
<dbReference type="InterPro" id="IPR036406">
    <property type="entry name" value="Coprogen_oxidase_aer_sf"/>
</dbReference>
<dbReference type="InterPro" id="IPR018375">
    <property type="entry name" value="Coprogen_oxidase_CS"/>
</dbReference>
<dbReference type="NCBIfam" id="NF003727">
    <property type="entry name" value="PRK05330.1"/>
    <property type="match status" value="1"/>
</dbReference>
<dbReference type="PANTHER" id="PTHR10755">
    <property type="entry name" value="COPROPORPHYRINOGEN III OXIDASE, MITOCHONDRIAL"/>
    <property type="match status" value="1"/>
</dbReference>
<dbReference type="PANTHER" id="PTHR10755:SF0">
    <property type="entry name" value="OXYGEN-DEPENDENT COPROPORPHYRINOGEN-III OXIDASE, MITOCHONDRIAL"/>
    <property type="match status" value="1"/>
</dbReference>
<dbReference type="Pfam" id="PF01218">
    <property type="entry name" value="Coprogen_oxidas"/>
    <property type="match status" value="1"/>
</dbReference>
<dbReference type="PIRSF" id="PIRSF000166">
    <property type="entry name" value="Coproporphyri_ox"/>
    <property type="match status" value="1"/>
</dbReference>
<dbReference type="PRINTS" id="PR00073">
    <property type="entry name" value="COPRGNOXDASE"/>
</dbReference>
<dbReference type="SUPFAM" id="SSF102886">
    <property type="entry name" value="Coproporphyrinogen III oxidase"/>
    <property type="match status" value="1"/>
</dbReference>
<dbReference type="PROSITE" id="PS01021">
    <property type="entry name" value="COPROGEN_OXIDASE"/>
    <property type="match status" value="1"/>
</dbReference>
<accession>A9NA93</accession>
<organism>
    <name type="scientific">Coxiella burnetii (strain RSA 331 / Henzerling II)</name>
    <dbReference type="NCBI Taxonomy" id="360115"/>
    <lineage>
        <taxon>Bacteria</taxon>
        <taxon>Pseudomonadati</taxon>
        <taxon>Pseudomonadota</taxon>
        <taxon>Gammaproteobacteria</taxon>
        <taxon>Legionellales</taxon>
        <taxon>Coxiellaceae</taxon>
        <taxon>Coxiella</taxon>
    </lineage>
</organism>
<name>HEM6_COXBR</name>
<feature type="chain" id="PRO_1000079256" description="Oxygen-dependent coproporphyrinogen-III oxidase">
    <location>
        <begin position="1"/>
        <end position="310"/>
    </location>
</feature>
<feature type="region of interest" description="Important for dimerization" evidence="1">
    <location>
        <begin position="245"/>
        <end position="280"/>
    </location>
</feature>
<feature type="active site" description="Proton donor" evidence="1">
    <location>
        <position position="111"/>
    </location>
</feature>
<feature type="binding site" evidence="1">
    <location>
        <position position="97"/>
    </location>
    <ligand>
        <name>substrate</name>
    </ligand>
</feature>
<feature type="binding site" evidence="1">
    <location>
        <position position="101"/>
    </location>
    <ligand>
        <name>a divalent metal cation</name>
        <dbReference type="ChEBI" id="CHEBI:60240"/>
    </ligand>
</feature>
<feature type="binding site" evidence="1">
    <location>
        <position position="111"/>
    </location>
    <ligand>
        <name>a divalent metal cation</name>
        <dbReference type="ChEBI" id="CHEBI:60240"/>
    </ligand>
</feature>
<feature type="binding site" evidence="1">
    <location>
        <begin position="113"/>
        <end position="115"/>
    </location>
    <ligand>
        <name>substrate</name>
    </ligand>
</feature>
<feature type="binding site" evidence="1">
    <location>
        <position position="150"/>
    </location>
    <ligand>
        <name>a divalent metal cation</name>
        <dbReference type="ChEBI" id="CHEBI:60240"/>
    </ligand>
</feature>
<feature type="binding site" evidence="1">
    <location>
        <position position="180"/>
    </location>
    <ligand>
        <name>a divalent metal cation</name>
        <dbReference type="ChEBI" id="CHEBI:60240"/>
    </ligand>
</feature>
<feature type="binding site" evidence="1">
    <location>
        <begin position="263"/>
        <end position="265"/>
    </location>
    <ligand>
        <name>substrate</name>
    </ligand>
</feature>
<feature type="site" description="Important for dimerization" evidence="1">
    <location>
        <position position="180"/>
    </location>
</feature>
<evidence type="ECO:0000255" key="1">
    <source>
        <dbReference type="HAMAP-Rule" id="MF_00333"/>
    </source>
</evidence>
<sequence>MRKDRQNKITEVGIYLKGLQNRLCRAFEKEEGESRFQETLWEKPNGGGGRTRLLTEGHVIEQGGVNFSCVYGNQLPPAATQKHPEISGFAFQAEGLSLVIHPRNPYVPTVHANFRFFIAGKDEADPRWWFGGGYDLTPYYGFEEDCRHWHRVAKKACDRFGEAIYPRFKAACDDYFYLKHRNEPRGIGGLFFDDLNEWEFKRCFEFIKILGDSFLEAYLPIMQNRKNHPYGERQREFQLYRRGRYVEFNLLYDRGTRFGLEFGGRTESILMSLPPRVVWRPNWEPEPGSEEARLYEDYLVRRNWVSVSGA</sequence>